<comment type="function">
    <text evidence="1">Poorly processive, error-prone DNA polymerase involved in untargeted mutagenesis. Copies undamaged DNA at stalled replication forks, which arise in vivo from mismatched or misaligned primer ends. These misaligned primers can be extended by PolIV. Exhibits no 3'-5' exonuclease (proofreading) activity. May be involved in translesional synthesis, in conjunction with the beta clamp from PolIII.</text>
</comment>
<comment type="catalytic activity">
    <reaction evidence="1">
        <text>DNA(n) + a 2'-deoxyribonucleoside 5'-triphosphate = DNA(n+1) + diphosphate</text>
        <dbReference type="Rhea" id="RHEA:22508"/>
        <dbReference type="Rhea" id="RHEA-COMP:17339"/>
        <dbReference type="Rhea" id="RHEA-COMP:17340"/>
        <dbReference type="ChEBI" id="CHEBI:33019"/>
        <dbReference type="ChEBI" id="CHEBI:61560"/>
        <dbReference type="ChEBI" id="CHEBI:173112"/>
        <dbReference type="EC" id="2.7.7.7"/>
    </reaction>
</comment>
<comment type="cofactor">
    <cofactor evidence="1">
        <name>Mg(2+)</name>
        <dbReference type="ChEBI" id="CHEBI:18420"/>
    </cofactor>
    <text evidence="1">Binds 2 magnesium ions per subunit.</text>
</comment>
<comment type="subunit">
    <text evidence="1">Monomer.</text>
</comment>
<comment type="subcellular location">
    <subcellularLocation>
        <location evidence="1">Cytoplasm</location>
    </subcellularLocation>
</comment>
<comment type="similarity">
    <text evidence="1">Belongs to the DNA polymerase type-Y family.</text>
</comment>
<name>DPO4_STRT1</name>
<evidence type="ECO:0000255" key="1">
    <source>
        <dbReference type="HAMAP-Rule" id="MF_01113"/>
    </source>
</evidence>
<feature type="chain" id="PRO_1000084962" description="DNA polymerase IV">
    <location>
        <begin position="1"/>
        <end position="367"/>
    </location>
</feature>
<feature type="domain" description="UmuC" evidence="1">
    <location>
        <begin position="14"/>
        <end position="198"/>
    </location>
</feature>
<feature type="active site" evidence="1">
    <location>
        <position position="117"/>
    </location>
</feature>
<feature type="binding site" evidence="1">
    <location>
        <position position="18"/>
    </location>
    <ligand>
        <name>Mg(2+)</name>
        <dbReference type="ChEBI" id="CHEBI:18420"/>
    </ligand>
</feature>
<feature type="binding site" evidence="1">
    <location>
        <position position="116"/>
    </location>
    <ligand>
        <name>Mg(2+)</name>
        <dbReference type="ChEBI" id="CHEBI:18420"/>
    </ligand>
</feature>
<feature type="site" description="Substrate discrimination" evidence="1">
    <location>
        <position position="23"/>
    </location>
</feature>
<organism>
    <name type="scientific">Streptococcus thermophilus (strain CNRZ 1066)</name>
    <dbReference type="NCBI Taxonomy" id="299768"/>
    <lineage>
        <taxon>Bacteria</taxon>
        <taxon>Bacillati</taxon>
        <taxon>Bacillota</taxon>
        <taxon>Bacilli</taxon>
        <taxon>Lactobacillales</taxon>
        <taxon>Streptococcaceae</taxon>
        <taxon>Streptococcus</taxon>
    </lineage>
</organism>
<sequence length="367" mass="41456">MLEFPLINDTSRKIIHIDMDAFFAQVEMRDDPSLKDKPVIIGNDPRKTGGRGVVSTCNYEARKYGVHSAMSSKEAYERCPNAVFISGNYSHYREVGMQIREIFKCYTDLVEPMSIDEAYLDVTTNKLGIKSAVKVAKLIQYDIWQELHLTCSAGVSYNKFIAKLASDFQKPAGLTVVLPEEAQDFLEKLPIEKFHGVGKKSVERLHDMDIYTGADLLKISEITLIDRFGRFGFDLFRKARGISNSPVKPNRVRKSIGSERTYGKLLYSEDDIKAELTKNAKQVAESAQKAKKVGRIIVIKVRYSDFSTLTKRMTLDKSTQDFDTIDRISHSIFDQLEENSSGVRLLGVTLTGLEDQEGRQLDLDDLA</sequence>
<protein>
    <recommendedName>
        <fullName evidence="1">DNA polymerase IV</fullName>
        <shortName evidence="1">Pol IV</shortName>
        <ecNumber evidence="1">2.7.7.7</ecNumber>
    </recommendedName>
</protein>
<proteinExistence type="inferred from homology"/>
<keyword id="KW-0963">Cytoplasm</keyword>
<keyword id="KW-0227">DNA damage</keyword>
<keyword id="KW-0234">DNA repair</keyword>
<keyword id="KW-0235">DNA replication</keyword>
<keyword id="KW-0238">DNA-binding</keyword>
<keyword id="KW-0239">DNA-directed DNA polymerase</keyword>
<keyword id="KW-0460">Magnesium</keyword>
<keyword id="KW-0479">Metal-binding</keyword>
<keyword id="KW-0515">Mutator protein</keyword>
<keyword id="KW-0548">Nucleotidyltransferase</keyword>
<keyword id="KW-0808">Transferase</keyword>
<gene>
    <name evidence="1" type="primary">dinB</name>
    <name type="ordered locus">str1656</name>
</gene>
<dbReference type="EC" id="2.7.7.7" evidence="1"/>
<dbReference type="EMBL" id="CP000024">
    <property type="protein sequence ID" value="AAV63186.1"/>
    <property type="molecule type" value="Genomic_DNA"/>
</dbReference>
<dbReference type="RefSeq" id="WP_011227504.1">
    <property type="nucleotide sequence ID" value="NC_006449.1"/>
</dbReference>
<dbReference type="SMR" id="Q5LYC2"/>
<dbReference type="KEGG" id="stc:str1656"/>
<dbReference type="HOGENOM" id="CLU_012348_1_2_9"/>
<dbReference type="GO" id="GO:0005829">
    <property type="term" value="C:cytosol"/>
    <property type="evidence" value="ECO:0007669"/>
    <property type="project" value="TreeGrafter"/>
</dbReference>
<dbReference type="GO" id="GO:0003684">
    <property type="term" value="F:damaged DNA binding"/>
    <property type="evidence" value="ECO:0007669"/>
    <property type="project" value="InterPro"/>
</dbReference>
<dbReference type="GO" id="GO:0003887">
    <property type="term" value="F:DNA-directed DNA polymerase activity"/>
    <property type="evidence" value="ECO:0007669"/>
    <property type="project" value="UniProtKB-UniRule"/>
</dbReference>
<dbReference type="GO" id="GO:0000287">
    <property type="term" value="F:magnesium ion binding"/>
    <property type="evidence" value="ECO:0007669"/>
    <property type="project" value="UniProtKB-UniRule"/>
</dbReference>
<dbReference type="GO" id="GO:0006261">
    <property type="term" value="P:DNA-templated DNA replication"/>
    <property type="evidence" value="ECO:0007669"/>
    <property type="project" value="UniProtKB-UniRule"/>
</dbReference>
<dbReference type="GO" id="GO:0042276">
    <property type="term" value="P:error-prone translesion synthesis"/>
    <property type="evidence" value="ECO:0007669"/>
    <property type="project" value="TreeGrafter"/>
</dbReference>
<dbReference type="GO" id="GO:0009432">
    <property type="term" value="P:SOS response"/>
    <property type="evidence" value="ECO:0007669"/>
    <property type="project" value="TreeGrafter"/>
</dbReference>
<dbReference type="CDD" id="cd03586">
    <property type="entry name" value="PolY_Pol_IV_kappa"/>
    <property type="match status" value="1"/>
</dbReference>
<dbReference type="FunFam" id="3.30.1490.100:FF:000004">
    <property type="entry name" value="DNA polymerase IV"/>
    <property type="match status" value="1"/>
</dbReference>
<dbReference type="FunFam" id="3.40.1170.60:FF:000001">
    <property type="entry name" value="DNA polymerase IV"/>
    <property type="match status" value="1"/>
</dbReference>
<dbReference type="Gene3D" id="3.30.70.270">
    <property type="match status" value="1"/>
</dbReference>
<dbReference type="Gene3D" id="3.40.1170.60">
    <property type="match status" value="1"/>
</dbReference>
<dbReference type="Gene3D" id="1.10.150.20">
    <property type="entry name" value="5' to 3' exonuclease, C-terminal subdomain"/>
    <property type="match status" value="1"/>
</dbReference>
<dbReference type="Gene3D" id="3.30.1490.100">
    <property type="entry name" value="DNA polymerase, Y-family, little finger domain"/>
    <property type="match status" value="1"/>
</dbReference>
<dbReference type="HAMAP" id="MF_01113">
    <property type="entry name" value="DNApol_IV"/>
    <property type="match status" value="1"/>
</dbReference>
<dbReference type="InterPro" id="IPR043502">
    <property type="entry name" value="DNA/RNA_pol_sf"/>
</dbReference>
<dbReference type="InterPro" id="IPR036775">
    <property type="entry name" value="DNA_pol_Y-fam_lit_finger_sf"/>
</dbReference>
<dbReference type="InterPro" id="IPR017961">
    <property type="entry name" value="DNA_pol_Y-fam_little_finger"/>
</dbReference>
<dbReference type="InterPro" id="IPR050116">
    <property type="entry name" value="DNA_polymerase-Y"/>
</dbReference>
<dbReference type="InterPro" id="IPR022880">
    <property type="entry name" value="DNApol_IV"/>
</dbReference>
<dbReference type="InterPro" id="IPR024728">
    <property type="entry name" value="PolY_HhH_motif"/>
</dbReference>
<dbReference type="InterPro" id="IPR043128">
    <property type="entry name" value="Rev_trsase/Diguanyl_cyclase"/>
</dbReference>
<dbReference type="InterPro" id="IPR001126">
    <property type="entry name" value="UmuC"/>
</dbReference>
<dbReference type="NCBIfam" id="NF002677">
    <property type="entry name" value="PRK02406.1"/>
    <property type="match status" value="1"/>
</dbReference>
<dbReference type="PANTHER" id="PTHR11076:SF33">
    <property type="entry name" value="DNA POLYMERASE KAPPA"/>
    <property type="match status" value="1"/>
</dbReference>
<dbReference type="PANTHER" id="PTHR11076">
    <property type="entry name" value="DNA REPAIR POLYMERASE UMUC / TRANSFERASE FAMILY MEMBER"/>
    <property type="match status" value="1"/>
</dbReference>
<dbReference type="Pfam" id="PF00817">
    <property type="entry name" value="IMS"/>
    <property type="match status" value="1"/>
</dbReference>
<dbReference type="Pfam" id="PF11799">
    <property type="entry name" value="IMS_C"/>
    <property type="match status" value="1"/>
</dbReference>
<dbReference type="Pfam" id="PF11798">
    <property type="entry name" value="IMS_HHH"/>
    <property type="match status" value="1"/>
</dbReference>
<dbReference type="SUPFAM" id="SSF56672">
    <property type="entry name" value="DNA/RNA polymerases"/>
    <property type="match status" value="1"/>
</dbReference>
<dbReference type="SUPFAM" id="SSF100879">
    <property type="entry name" value="Lesion bypass DNA polymerase (Y-family), little finger domain"/>
    <property type="match status" value="1"/>
</dbReference>
<dbReference type="PROSITE" id="PS50173">
    <property type="entry name" value="UMUC"/>
    <property type="match status" value="1"/>
</dbReference>
<accession>Q5LYC2</accession>
<reference key="1">
    <citation type="journal article" date="2004" name="Nat. Biotechnol.">
        <title>Complete sequence and comparative genome analysis of the dairy bacterium Streptococcus thermophilus.</title>
        <authorList>
            <person name="Bolotin A."/>
            <person name="Quinquis B."/>
            <person name="Renault P."/>
            <person name="Sorokin A."/>
            <person name="Ehrlich S.D."/>
            <person name="Kulakauskas S."/>
            <person name="Lapidus A."/>
            <person name="Goltsman E."/>
            <person name="Mazur M."/>
            <person name="Pusch G.D."/>
            <person name="Fonstein M."/>
            <person name="Overbeek R."/>
            <person name="Kyprides N."/>
            <person name="Purnelle B."/>
            <person name="Prozzi D."/>
            <person name="Ngui K."/>
            <person name="Masuy D."/>
            <person name="Hancy F."/>
            <person name="Burteau S."/>
            <person name="Boutry M."/>
            <person name="Delcour J."/>
            <person name="Goffeau A."/>
            <person name="Hols P."/>
        </authorList>
    </citation>
    <scope>NUCLEOTIDE SEQUENCE [LARGE SCALE GENOMIC DNA]</scope>
    <source>
        <strain>CNRZ 1066</strain>
    </source>
</reference>